<keyword id="KW-0067">ATP-binding</keyword>
<keyword id="KW-0238">DNA-binding</keyword>
<keyword id="KW-0479">Metal-binding</keyword>
<keyword id="KW-0547">Nucleotide-binding</keyword>
<keyword id="KW-0678">Repressor</keyword>
<keyword id="KW-0804">Transcription</keyword>
<keyword id="KW-0805">Transcription regulation</keyword>
<keyword id="KW-0862">Zinc</keyword>
<keyword id="KW-0863">Zinc-finger</keyword>
<feature type="chain" id="PRO_0000264225" description="Transcriptional repressor NrdR">
    <location>
        <begin position="1"/>
        <end position="200"/>
    </location>
</feature>
<feature type="domain" description="ATP-cone" evidence="1">
    <location>
        <begin position="49"/>
        <end position="139"/>
    </location>
</feature>
<feature type="zinc finger region" evidence="1">
    <location>
        <begin position="3"/>
        <end position="34"/>
    </location>
</feature>
<feature type="region of interest" description="Disordered" evidence="2">
    <location>
        <begin position="158"/>
        <end position="200"/>
    </location>
</feature>
<feature type="compositionally biased region" description="Polar residues" evidence="2">
    <location>
        <begin position="186"/>
        <end position="200"/>
    </location>
</feature>
<accession>Q2JVG1</accession>
<reference key="1">
    <citation type="journal article" date="2007" name="ISME J.">
        <title>Population level functional diversity in a microbial community revealed by comparative genomic and metagenomic analyses.</title>
        <authorList>
            <person name="Bhaya D."/>
            <person name="Grossman A.R."/>
            <person name="Steunou A.-S."/>
            <person name="Khuri N."/>
            <person name="Cohan F.M."/>
            <person name="Hamamura N."/>
            <person name="Melendrez M.C."/>
            <person name="Bateson M.M."/>
            <person name="Ward D.M."/>
            <person name="Heidelberg J.F."/>
        </authorList>
    </citation>
    <scope>NUCLEOTIDE SEQUENCE [LARGE SCALE GENOMIC DNA]</scope>
    <source>
        <strain>JA-3-3Ab</strain>
    </source>
</reference>
<comment type="function">
    <text evidence="1">Negatively regulates transcription of bacterial ribonucleotide reductase nrd genes and operons by binding to NrdR-boxes.</text>
</comment>
<comment type="cofactor">
    <cofactor evidence="1">
        <name>Zn(2+)</name>
        <dbReference type="ChEBI" id="CHEBI:29105"/>
    </cofactor>
    <text evidence="1">Binds 1 zinc ion.</text>
</comment>
<comment type="similarity">
    <text evidence="1">Belongs to the NrdR family.</text>
</comment>
<sequence>MKCPRCGKQEIRVLESRSAEGGQSVRRRRECMSCGYRFTTYERIEFMPIMVIKRDGSRESFNRNKILQGVMRACQKTQVSVKQMEELVNEIEEKLQLEDVQEVTTLRIGEMVLERLQRLSEVAYVRFASVYRKFQGIKDFVTELEQLERLETHLRRDLERPLRNSPPSESESTASPDWVGGIPQLLDQNDTSSNLSEIPK</sequence>
<evidence type="ECO:0000255" key="1">
    <source>
        <dbReference type="HAMAP-Rule" id="MF_00440"/>
    </source>
</evidence>
<evidence type="ECO:0000256" key="2">
    <source>
        <dbReference type="SAM" id="MobiDB-lite"/>
    </source>
</evidence>
<dbReference type="EMBL" id="CP000239">
    <property type="protein sequence ID" value="ABC99278.1"/>
    <property type="molecule type" value="Genomic_DNA"/>
</dbReference>
<dbReference type="RefSeq" id="WP_011429961.1">
    <property type="nucleotide sequence ID" value="NC_007775.1"/>
</dbReference>
<dbReference type="SMR" id="Q2JVG1"/>
<dbReference type="STRING" id="321327.CYA_1083"/>
<dbReference type="KEGG" id="cya:CYA_1083"/>
<dbReference type="eggNOG" id="COG1327">
    <property type="taxonomic scope" value="Bacteria"/>
</dbReference>
<dbReference type="HOGENOM" id="CLU_108412_0_0_3"/>
<dbReference type="OrthoDB" id="9807461at2"/>
<dbReference type="Proteomes" id="UP000008818">
    <property type="component" value="Chromosome"/>
</dbReference>
<dbReference type="GO" id="GO:0005524">
    <property type="term" value="F:ATP binding"/>
    <property type="evidence" value="ECO:0007669"/>
    <property type="project" value="UniProtKB-KW"/>
</dbReference>
<dbReference type="GO" id="GO:0003677">
    <property type="term" value="F:DNA binding"/>
    <property type="evidence" value="ECO:0007669"/>
    <property type="project" value="UniProtKB-KW"/>
</dbReference>
<dbReference type="GO" id="GO:0008270">
    <property type="term" value="F:zinc ion binding"/>
    <property type="evidence" value="ECO:0007669"/>
    <property type="project" value="UniProtKB-UniRule"/>
</dbReference>
<dbReference type="GO" id="GO:0045892">
    <property type="term" value="P:negative regulation of DNA-templated transcription"/>
    <property type="evidence" value="ECO:0007669"/>
    <property type="project" value="UniProtKB-UniRule"/>
</dbReference>
<dbReference type="HAMAP" id="MF_00440">
    <property type="entry name" value="NrdR"/>
    <property type="match status" value="1"/>
</dbReference>
<dbReference type="InterPro" id="IPR005144">
    <property type="entry name" value="ATP-cone_dom"/>
</dbReference>
<dbReference type="InterPro" id="IPR055173">
    <property type="entry name" value="NrdR-like_N"/>
</dbReference>
<dbReference type="InterPro" id="IPR003796">
    <property type="entry name" value="RNR_NrdR-like"/>
</dbReference>
<dbReference type="NCBIfam" id="TIGR00244">
    <property type="entry name" value="transcriptional regulator NrdR"/>
    <property type="match status" value="1"/>
</dbReference>
<dbReference type="PANTHER" id="PTHR30455">
    <property type="entry name" value="TRANSCRIPTIONAL REPRESSOR NRDR"/>
    <property type="match status" value="1"/>
</dbReference>
<dbReference type="PANTHER" id="PTHR30455:SF2">
    <property type="entry name" value="TRANSCRIPTIONAL REPRESSOR NRDR"/>
    <property type="match status" value="1"/>
</dbReference>
<dbReference type="Pfam" id="PF03477">
    <property type="entry name" value="ATP-cone"/>
    <property type="match status" value="1"/>
</dbReference>
<dbReference type="Pfam" id="PF22811">
    <property type="entry name" value="Zn_ribbon_NrdR"/>
    <property type="match status" value="1"/>
</dbReference>
<dbReference type="PROSITE" id="PS51161">
    <property type="entry name" value="ATP_CONE"/>
    <property type="match status" value="1"/>
</dbReference>
<proteinExistence type="inferred from homology"/>
<name>NRDR_SYNJA</name>
<protein>
    <recommendedName>
        <fullName evidence="1">Transcriptional repressor NrdR</fullName>
    </recommendedName>
</protein>
<gene>
    <name evidence="1" type="primary">nrdR</name>
    <name type="ordered locus">CYA_1083</name>
</gene>
<organism>
    <name type="scientific">Synechococcus sp. (strain JA-3-3Ab)</name>
    <name type="common">Cyanobacteria bacterium Yellowstone A-Prime</name>
    <dbReference type="NCBI Taxonomy" id="321327"/>
    <lineage>
        <taxon>Bacteria</taxon>
        <taxon>Bacillati</taxon>
        <taxon>Cyanobacteriota</taxon>
        <taxon>Cyanophyceae</taxon>
        <taxon>Synechococcales</taxon>
        <taxon>Synechococcaceae</taxon>
        <taxon>Synechococcus</taxon>
    </lineage>
</organism>